<comment type="similarity">
    <text evidence="1">Belongs to the eukaryotic ribosomal protein eS28 family.</text>
</comment>
<comment type="sequence caution" evidence="1">
    <conflict type="erroneous initiation">
        <sequence resource="EMBL-CDS" id="AAB99206"/>
    </conflict>
</comment>
<gene>
    <name type="primary">rps28e</name>
    <name type="ordered locus">MJ1202</name>
</gene>
<keyword id="KW-1185">Reference proteome</keyword>
<keyword id="KW-0687">Ribonucleoprotein</keyword>
<keyword id="KW-0689">Ribosomal protein</keyword>
<evidence type="ECO:0000305" key="1"/>
<sequence length="75" mass="8364">MEDEFVYKEAVAAEVIEVIGRTGVTGGIIQVRCKILGGKDTGRVLVRNVKGPVKVGDIIMLRETEREARPLDRRR</sequence>
<accession>P54065</accession>
<dbReference type="EMBL" id="L77117">
    <property type="protein sequence ID" value="AAB99206.1"/>
    <property type="status" value="ALT_INIT"/>
    <property type="molecule type" value="Genomic_DNA"/>
</dbReference>
<dbReference type="PIR" id="A64450">
    <property type="entry name" value="A64450"/>
</dbReference>
<dbReference type="RefSeq" id="WP_012980426.1">
    <property type="nucleotide sequence ID" value="NC_000909.1"/>
</dbReference>
<dbReference type="SMR" id="P54065"/>
<dbReference type="FunCoup" id="P54065">
    <property type="interactions" value="150"/>
</dbReference>
<dbReference type="STRING" id="243232.MJ_1202"/>
<dbReference type="PaxDb" id="243232-MJ_1202"/>
<dbReference type="EnsemblBacteria" id="AAB99206">
    <property type="protein sequence ID" value="AAB99206"/>
    <property type="gene ID" value="MJ_1202"/>
</dbReference>
<dbReference type="KEGG" id="mja:MJ_1202"/>
<dbReference type="eggNOG" id="arCOG04314">
    <property type="taxonomic scope" value="Archaea"/>
</dbReference>
<dbReference type="HOGENOM" id="CLU_178987_2_1_2"/>
<dbReference type="InParanoid" id="P54065"/>
<dbReference type="OrthoDB" id="7620at2157"/>
<dbReference type="PhylomeDB" id="P54065"/>
<dbReference type="Proteomes" id="UP000000805">
    <property type="component" value="Chromosome"/>
</dbReference>
<dbReference type="GO" id="GO:0022627">
    <property type="term" value="C:cytosolic small ribosomal subunit"/>
    <property type="evidence" value="ECO:0000318"/>
    <property type="project" value="GO_Central"/>
</dbReference>
<dbReference type="GO" id="GO:0003735">
    <property type="term" value="F:structural constituent of ribosome"/>
    <property type="evidence" value="ECO:0000318"/>
    <property type="project" value="GO_Central"/>
</dbReference>
<dbReference type="GO" id="GO:0030490">
    <property type="term" value="P:maturation of SSU-rRNA"/>
    <property type="evidence" value="ECO:0000318"/>
    <property type="project" value="GO_Central"/>
</dbReference>
<dbReference type="GO" id="GO:0000028">
    <property type="term" value="P:ribosomal small subunit assembly"/>
    <property type="evidence" value="ECO:0000318"/>
    <property type="project" value="GO_Central"/>
</dbReference>
<dbReference type="GO" id="GO:0006412">
    <property type="term" value="P:translation"/>
    <property type="evidence" value="ECO:0007669"/>
    <property type="project" value="UniProtKB-UniRule"/>
</dbReference>
<dbReference type="CDD" id="cd04457">
    <property type="entry name" value="S1_S28E"/>
    <property type="match status" value="1"/>
</dbReference>
<dbReference type="FunFam" id="2.40.50.140:FF:000145">
    <property type="entry name" value="30S ribosomal protein S28e"/>
    <property type="match status" value="1"/>
</dbReference>
<dbReference type="Gene3D" id="2.40.50.140">
    <property type="entry name" value="Nucleic acid-binding proteins"/>
    <property type="match status" value="1"/>
</dbReference>
<dbReference type="HAMAP" id="MF_00292">
    <property type="entry name" value="Ribosomal_eS28"/>
    <property type="match status" value="1"/>
</dbReference>
<dbReference type="InterPro" id="IPR012340">
    <property type="entry name" value="NA-bd_OB-fold"/>
</dbReference>
<dbReference type="InterPro" id="IPR000289">
    <property type="entry name" value="Ribosomal_eS28"/>
</dbReference>
<dbReference type="InterPro" id="IPR028626">
    <property type="entry name" value="Ribosomal_eS28_CS"/>
</dbReference>
<dbReference type="NCBIfam" id="NF003080">
    <property type="entry name" value="PRK04007.1"/>
    <property type="match status" value="1"/>
</dbReference>
<dbReference type="PANTHER" id="PTHR10769">
    <property type="entry name" value="40S RIBOSOMAL PROTEIN S28"/>
    <property type="match status" value="1"/>
</dbReference>
<dbReference type="PANTHER" id="PTHR10769:SF3">
    <property type="entry name" value="SMALL RIBOSOMAL SUBUNIT PROTEIN ES28"/>
    <property type="match status" value="1"/>
</dbReference>
<dbReference type="Pfam" id="PF01200">
    <property type="entry name" value="Ribosomal_S28e"/>
    <property type="match status" value="1"/>
</dbReference>
<dbReference type="SUPFAM" id="SSF50249">
    <property type="entry name" value="Nucleic acid-binding proteins"/>
    <property type="match status" value="1"/>
</dbReference>
<dbReference type="PROSITE" id="PS00961">
    <property type="entry name" value="RIBOSOMAL_S28E"/>
    <property type="match status" value="1"/>
</dbReference>
<reference key="1">
    <citation type="journal article" date="1996" name="Science">
        <title>Complete genome sequence of the methanogenic archaeon, Methanococcus jannaschii.</title>
        <authorList>
            <person name="Bult C.J."/>
            <person name="White O."/>
            <person name="Olsen G.J."/>
            <person name="Zhou L."/>
            <person name="Fleischmann R.D."/>
            <person name="Sutton G.G."/>
            <person name="Blake J.A."/>
            <person name="FitzGerald L.M."/>
            <person name="Clayton R.A."/>
            <person name="Gocayne J.D."/>
            <person name="Kerlavage A.R."/>
            <person name="Dougherty B.A."/>
            <person name="Tomb J.-F."/>
            <person name="Adams M.D."/>
            <person name="Reich C.I."/>
            <person name="Overbeek R."/>
            <person name="Kirkness E.F."/>
            <person name="Weinstock K.G."/>
            <person name="Merrick J.M."/>
            <person name="Glodek A."/>
            <person name="Scott J.L."/>
            <person name="Geoghagen N.S.M."/>
            <person name="Weidman J.F."/>
            <person name="Fuhrmann J.L."/>
            <person name="Nguyen D."/>
            <person name="Utterback T.R."/>
            <person name="Kelley J.M."/>
            <person name="Peterson J.D."/>
            <person name="Sadow P.W."/>
            <person name="Hanna M.C."/>
            <person name="Cotton M.D."/>
            <person name="Roberts K.M."/>
            <person name="Hurst M.A."/>
            <person name="Kaine B.P."/>
            <person name="Borodovsky M."/>
            <person name="Klenk H.-P."/>
            <person name="Fraser C.M."/>
            <person name="Smith H.O."/>
            <person name="Woese C.R."/>
            <person name="Venter J.C."/>
        </authorList>
    </citation>
    <scope>NUCLEOTIDE SEQUENCE [LARGE SCALE GENOMIC DNA]</scope>
    <source>
        <strain>ATCC 43067 / DSM 2661 / JAL-1 / JCM 10045 / NBRC 100440</strain>
    </source>
</reference>
<proteinExistence type="inferred from homology"/>
<protein>
    <recommendedName>
        <fullName evidence="1">Small ribosomal subunit protein eS28</fullName>
    </recommendedName>
    <alternativeName>
        <fullName>30S ribosomal protein S28e</fullName>
    </alternativeName>
</protein>
<feature type="chain" id="PRO_0000136848" description="Small ribosomal subunit protein eS28">
    <location>
        <begin position="1"/>
        <end position="75"/>
    </location>
</feature>
<organism>
    <name type="scientific">Methanocaldococcus jannaschii (strain ATCC 43067 / DSM 2661 / JAL-1 / JCM 10045 / NBRC 100440)</name>
    <name type="common">Methanococcus jannaschii</name>
    <dbReference type="NCBI Taxonomy" id="243232"/>
    <lineage>
        <taxon>Archaea</taxon>
        <taxon>Methanobacteriati</taxon>
        <taxon>Methanobacteriota</taxon>
        <taxon>Methanomada group</taxon>
        <taxon>Methanococci</taxon>
        <taxon>Methanococcales</taxon>
        <taxon>Methanocaldococcaceae</taxon>
        <taxon>Methanocaldococcus</taxon>
    </lineage>
</organism>
<name>RS28_METJA</name>